<dbReference type="EMBL" id="AAFW02000032">
    <property type="protein sequence ID" value="EDN63681.1"/>
    <property type="molecule type" value="Genomic_DNA"/>
</dbReference>
<dbReference type="SMR" id="A6ZPJ1"/>
<dbReference type="IntAct" id="A6ZPJ1">
    <property type="interactions" value="2"/>
</dbReference>
<dbReference type="MINT" id="A6ZPJ1"/>
<dbReference type="HOGENOM" id="CLU_011152_4_0_1"/>
<dbReference type="Proteomes" id="UP000007060">
    <property type="component" value="Unassembled WGS sequence"/>
</dbReference>
<dbReference type="GO" id="GO:0016282">
    <property type="term" value="C:eukaryotic 43S preinitiation complex"/>
    <property type="evidence" value="ECO:0007669"/>
    <property type="project" value="UniProtKB-UniRule"/>
</dbReference>
<dbReference type="GO" id="GO:0033290">
    <property type="term" value="C:eukaryotic 48S preinitiation complex"/>
    <property type="evidence" value="ECO:0007669"/>
    <property type="project" value="UniProtKB-UniRule"/>
</dbReference>
<dbReference type="GO" id="GO:0005852">
    <property type="term" value="C:eukaryotic translation initiation factor 3 complex"/>
    <property type="evidence" value="ECO:0007669"/>
    <property type="project" value="UniProtKB-UniRule"/>
</dbReference>
<dbReference type="GO" id="GO:0003723">
    <property type="term" value="F:RNA binding"/>
    <property type="evidence" value="ECO:0007669"/>
    <property type="project" value="UniProtKB-UniRule"/>
</dbReference>
<dbReference type="GO" id="GO:0003743">
    <property type="term" value="F:translation initiation factor activity"/>
    <property type="evidence" value="ECO:0007669"/>
    <property type="project" value="UniProtKB-UniRule"/>
</dbReference>
<dbReference type="GO" id="GO:0031369">
    <property type="term" value="F:translation initiation factor binding"/>
    <property type="evidence" value="ECO:0007669"/>
    <property type="project" value="InterPro"/>
</dbReference>
<dbReference type="GO" id="GO:0001732">
    <property type="term" value="P:formation of cytoplasmic translation initiation complex"/>
    <property type="evidence" value="ECO:0007669"/>
    <property type="project" value="UniProtKB-UniRule"/>
</dbReference>
<dbReference type="CDD" id="cd12278">
    <property type="entry name" value="RRM_eIF3B"/>
    <property type="match status" value="1"/>
</dbReference>
<dbReference type="FunFam" id="3.30.70.330:FF:000739">
    <property type="entry name" value="Eukaryotic translation initiation factor 3 subunit B"/>
    <property type="match status" value="1"/>
</dbReference>
<dbReference type="Gene3D" id="3.30.70.330">
    <property type="match status" value="1"/>
</dbReference>
<dbReference type="HAMAP" id="MF_03001">
    <property type="entry name" value="eIF3b"/>
    <property type="match status" value="1"/>
</dbReference>
<dbReference type="InterPro" id="IPR011400">
    <property type="entry name" value="EIF3B"/>
</dbReference>
<dbReference type="InterPro" id="IPR034363">
    <property type="entry name" value="eIF3B_RRM"/>
</dbReference>
<dbReference type="InterPro" id="IPR012677">
    <property type="entry name" value="Nucleotide-bd_a/b_plait_sf"/>
</dbReference>
<dbReference type="InterPro" id="IPR035979">
    <property type="entry name" value="RBD_domain_sf"/>
</dbReference>
<dbReference type="InterPro" id="IPR000504">
    <property type="entry name" value="RRM_dom"/>
</dbReference>
<dbReference type="InterPro" id="IPR013979">
    <property type="entry name" value="TIF_beta_prop-like"/>
</dbReference>
<dbReference type="PANTHER" id="PTHR14068">
    <property type="entry name" value="EUKARYOTIC TRANSLATION INITIATION FACTOR 3 EIF3 -RELATED"/>
    <property type="match status" value="1"/>
</dbReference>
<dbReference type="PANTHER" id="PTHR14068:SF0">
    <property type="entry name" value="EUKARYOTIC TRANSLATION INITIATION FACTOR 3 SUBUNIT B"/>
    <property type="match status" value="1"/>
</dbReference>
<dbReference type="Pfam" id="PF08662">
    <property type="entry name" value="eIF2A"/>
    <property type="match status" value="1"/>
</dbReference>
<dbReference type="Pfam" id="PF00076">
    <property type="entry name" value="RRM_1"/>
    <property type="match status" value="1"/>
</dbReference>
<dbReference type="PIRSF" id="PIRSF036424">
    <property type="entry name" value="eIF3b"/>
    <property type="match status" value="1"/>
</dbReference>
<dbReference type="SMART" id="SM00360">
    <property type="entry name" value="RRM"/>
    <property type="match status" value="1"/>
</dbReference>
<dbReference type="SUPFAM" id="SSF82171">
    <property type="entry name" value="DPP6 N-terminal domain-like"/>
    <property type="match status" value="1"/>
</dbReference>
<dbReference type="SUPFAM" id="SSF54928">
    <property type="entry name" value="RNA-binding domain, RBD"/>
    <property type="match status" value="1"/>
</dbReference>
<dbReference type="PROSITE" id="PS50102">
    <property type="entry name" value="RRM"/>
    <property type="match status" value="1"/>
</dbReference>
<organism>
    <name type="scientific">Saccharomyces cerevisiae (strain YJM789)</name>
    <name type="common">Baker's yeast</name>
    <dbReference type="NCBI Taxonomy" id="307796"/>
    <lineage>
        <taxon>Eukaryota</taxon>
        <taxon>Fungi</taxon>
        <taxon>Dikarya</taxon>
        <taxon>Ascomycota</taxon>
        <taxon>Saccharomycotina</taxon>
        <taxon>Saccharomycetes</taxon>
        <taxon>Saccharomycetales</taxon>
        <taxon>Saccharomycetaceae</taxon>
        <taxon>Saccharomyces</taxon>
    </lineage>
</organism>
<evidence type="ECO:0000250" key="1">
    <source>
        <dbReference type="UniProtKB" id="P06103"/>
    </source>
</evidence>
<evidence type="ECO:0000255" key="2">
    <source>
        <dbReference type="HAMAP-Rule" id="MF_03001"/>
    </source>
</evidence>
<reference key="1">
    <citation type="journal article" date="2007" name="Proc. Natl. Acad. Sci. U.S.A.">
        <title>Genome sequencing and comparative analysis of Saccharomyces cerevisiae strain YJM789.</title>
        <authorList>
            <person name="Wei W."/>
            <person name="McCusker J.H."/>
            <person name="Hyman R.W."/>
            <person name="Jones T."/>
            <person name="Ning Y."/>
            <person name="Cao Z."/>
            <person name="Gu Z."/>
            <person name="Bruno D."/>
            <person name="Miranda M."/>
            <person name="Nguyen M."/>
            <person name="Wilhelmy J."/>
            <person name="Komp C."/>
            <person name="Tamse R."/>
            <person name="Wang X."/>
            <person name="Jia P."/>
            <person name="Luedi P."/>
            <person name="Oefner P.J."/>
            <person name="David L."/>
            <person name="Dietrich F.S."/>
            <person name="Li Y."/>
            <person name="Davis R.W."/>
            <person name="Steinmetz L.M."/>
        </authorList>
    </citation>
    <scope>NUCLEOTIDE SEQUENCE [LARGE SCALE GENOMIC DNA]</scope>
    <source>
        <strain>YJM789</strain>
    </source>
</reference>
<proteinExistence type="inferred from homology"/>
<comment type="function">
    <text evidence="2">RNA-binding component of the eukaryotic translation initiation factor 3 (eIF-3) complex, which is involved in protein synthesis of a specialized repertoire of mRNAs and, together with other initiation factors, stimulates binding of mRNA and methionyl-tRNAi to the 40S ribosome. The eIF-3 complex specifically targets and initiates translation of a subset of mRNAs involved in cell proliferation.</text>
</comment>
<comment type="subunit">
    <text evidence="2">Component of the eukaryotic translation initiation factor 3 (eIF-3) complex.</text>
</comment>
<comment type="subcellular location">
    <subcellularLocation>
        <location evidence="2">Cytoplasm</location>
    </subcellularLocation>
</comment>
<comment type="similarity">
    <text evidence="2">Belongs to the eIF-3 subunit B family.</text>
</comment>
<accession>A6ZPJ1</accession>
<keyword id="KW-0963">Cytoplasm</keyword>
<keyword id="KW-0396">Initiation factor</keyword>
<keyword id="KW-0597">Phosphoprotein</keyword>
<keyword id="KW-0648">Protein biosynthesis</keyword>
<keyword id="KW-0694">RNA-binding</keyword>
<gene>
    <name evidence="2" type="primary">PRT1</name>
    <name type="ORF">SCY_5406</name>
</gene>
<name>EIF3B_YEAS7</name>
<sequence>MKNFLPRTLKNIYELYFNNISVHSIVSRNTQLKRSKIIQMTTETFEDIKLEDIPVDDIDFSDLEEQYKVTEEFNFDQYIVVNGAPVIPSAKVPVLKKALTSLFSKAGKVVNMEFPIDEATGKTKGFLFVECGSMNDAKKIIKSFHGKRLDLKHRLFLYTMKDVERYNSDDFDTEFREPDMPTFVPSSSLKSWLMDDKVRDQFVLQDDVKTSVFWNSMFNEEDSLVESRENWSTNYVRFSPKGTYLFSYHQQGVTAWGGPNFDRLRRFYHPDVRNSSVSPNEKYLVTFSTEPIIVEEDNEFSPFTKKNEGHQLCIWDIASGLLMATFPVIKSPYLKWPLVRWSYNDKYCARMVGDSLIVHDATKNFMPLEAKALKPSGIRDFSFAPEGVKLQPFRNGDEPSVLLAYWTPETNNSACTATIAEVPRGRVLKTVNLVQVSNVTLHWQNQAEFLCFNVERHTKSGKTQFSNLQICRLTERDIPVEKVELKDSVFEFGWEPHGNRFVTISVHEVADMNYAIPANTIRFYAPETKEKTAKDVIKRWSLVKEIPKTFANTVSWSPAGRFVVVGALVGPNMRRSDLQFYDMDYPGEKNINDNNDVSASLKDVAHPTYSAATNITWDPSGRYVTAWSSSLKHKVEHGYKIFNIAGNLVKEDIIAGFKNFAWRPRPASILSNAERKKVRKNLREWSAQFEEQDAMEADTAMRDLILHQRELLKQWTEYREKIGQEMEKSMNFKIFDVQPEDASDDFTTIEEIVEEVLEETKEKVE</sequence>
<feature type="chain" id="PRO_0000366878" description="Eukaryotic translation initiation factor 3 subunit B">
    <location>
        <begin position="1"/>
        <end position="765"/>
    </location>
</feature>
<feature type="domain" description="RRM" evidence="2">
    <location>
        <begin position="77"/>
        <end position="162"/>
    </location>
</feature>
<feature type="region of interest" description="Sufficient for interaction with HCR1 and TIF32" evidence="2">
    <location>
        <begin position="1"/>
        <end position="136"/>
    </location>
</feature>
<feature type="region of interest" description="Sufficient for interaction with PIC8" evidence="2">
    <location>
        <begin position="28"/>
        <end position="261"/>
    </location>
</feature>
<feature type="modified residue" description="Phosphoserine" evidence="1 2">
    <location>
        <position position="61"/>
    </location>
</feature>
<feature type="modified residue" description="Phosphotyrosine" evidence="1">
    <location>
        <position position="67"/>
    </location>
</feature>
<feature type="modified residue" description="Phosphoserine" evidence="1 2">
    <location>
        <position position="671"/>
    </location>
</feature>
<protein>
    <recommendedName>
        <fullName evidence="2">Eukaryotic translation initiation factor 3 subunit B</fullName>
        <shortName evidence="2">eIF3b</shortName>
    </recommendedName>
    <alternativeName>
        <fullName evidence="2">Eukaryotic translation initiation factor 3 90 kDa subunit homolog</fullName>
        <shortName evidence="2">eIF3 p90</shortName>
    </alternativeName>
    <alternativeName>
        <fullName evidence="2">Translation initiation factor eIF3, p90 subunit homolog</fullName>
    </alternativeName>
</protein>